<gene>
    <name evidence="1" type="primary">thiK</name>
    <name type="ordered locus">SPA1643</name>
</gene>
<reference key="1">
    <citation type="journal article" date="2004" name="Nat. Genet.">
        <title>Comparison of genome degradation in Paratyphi A and Typhi, human-restricted serovars of Salmonella enterica that cause typhoid.</title>
        <authorList>
            <person name="McClelland M."/>
            <person name="Sanderson K.E."/>
            <person name="Clifton S.W."/>
            <person name="Latreille P."/>
            <person name="Porwollik S."/>
            <person name="Sabo A."/>
            <person name="Meyer R."/>
            <person name="Bieri T."/>
            <person name="Ozersky P."/>
            <person name="McLellan M."/>
            <person name="Harkins C.R."/>
            <person name="Wang C."/>
            <person name="Nguyen C."/>
            <person name="Berghoff A."/>
            <person name="Elliott G."/>
            <person name="Kohlberg S."/>
            <person name="Strong C."/>
            <person name="Du F."/>
            <person name="Carter J."/>
            <person name="Kremizki C."/>
            <person name="Layman D."/>
            <person name="Leonard S."/>
            <person name="Sun H."/>
            <person name="Fulton L."/>
            <person name="Nash W."/>
            <person name="Miner T."/>
            <person name="Minx P."/>
            <person name="Delehaunty K."/>
            <person name="Fronick C."/>
            <person name="Magrini V."/>
            <person name="Nhan M."/>
            <person name="Warren W."/>
            <person name="Florea L."/>
            <person name="Spieth J."/>
            <person name="Wilson R.K."/>
        </authorList>
    </citation>
    <scope>NUCLEOTIDE SEQUENCE [LARGE SCALE GENOMIC DNA]</scope>
    <source>
        <strain>ATCC 9150 / SARB42</strain>
    </source>
</reference>
<keyword id="KW-0067">ATP-binding</keyword>
<keyword id="KW-0418">Kinase</keyword>
<keyword id="KW-0547">Nucleotide-binding</keyword>
<keyword id="KW-0808">Transferase</keyword>
<evidence type="ECO:0000255" key="1">
    <source>
        <dbReference type="HAMAP-Rule" id="MF_01604"/>
    </source>
</evidence>
<accession>Q5PGS9</accession>
<sequence>MRSNNNNPLTRDEILSRYFPQYRPAVTASQGLSGGSCIIAHDTHRIVLRRHHDPDAPPAHFLRHHRALSQLPASLAPRALFYTPGWMAVEYLHGVVNSALPDADELAALLYHLHQQPHFGWRIALSPLLAQYWSCCDPARRTPFWLRRLKQLQKNGEPRPLRLAPLHMDVHGDNIVLTSAGLRLIDWEYAGDGDIALELAAVWVEDERQHRQLADAYAARARIDARQLWRQIRLWHPWVIMLKAGWFEYRWRQTGEQQFIRLADETWRQLRMKG</sequence>
<name>THIK_SALPA</name>
<proteinExistence type="inferred from homology"/>
<feature type="chain" id="PRO_0000218060" description="Thiamine kinase">
    <location>
        <begin position="1"/>
        <end position="274"/>
    </location>
</feature>
<dbReference type="EC" id="2.7.1.89" evidence="1"/>
<dbReference type="EMBL" id="CP000026">
    <property type="protein sequence ID" value="AAV77570.1"/>
    <property type="molecule type" value="Genomic_DNA"/>
</dbReference>
<dbReference type="RefSeq" id="WP_001257343.1">
    <property type="nucleotide sequence ID" value="NC_006511.1"/>
</dbReference>
<dbReference type="SMR" id="Q5PGS9"/>
<dbReference type="KEGG" id="spt:SPA1643"/>
<dbReference type="HOGENOM" id="CLU_055115_2_1_6"/>
<dbReference type="UniPathway" id="UPA00060">
    <property type="reaction ID" value="UER00596"/>
</dbReference>
<dbReference type="Proteomes" id="UP000008185">
    <property type="component" value="Chromosome"/>
</dbReference>
<dbReference type="GO" id="GO:0005524">
    <property type="term" value="F:ATP binding"/>
    <property type="evidence" value="ECO:0007669"/>
    <property type="project" value="UniProtKB-KW"/>
</dbReference>
<dbReference type="GO" id="GO:0019165">
    <property type="term" value="F:thiamine kinase activity"/>
    <property type="evidence" value="ECO:0007669"/>
    <property type="project" value="UniProtKB-UniRule"/>
</dbReference>
<dbReference type="GO" id="GO:0009229">
    <property type="term" value="P:thiamine diphosphate biosynthetic process"/>
    <property type="evidence" value="ECO:0007669"/>
    <property type="project" value="UniProtKB-UniRule"/>
</dbReference>
<dbReference type="GO" id="GO:0006772">
    <property type="term" value="P:thiamine metabolic process"/>
    <property type="evidence" value="ECO:0007669"/>
    <property type="project" value="InterPro"/>
</dbReference>
<dbReference type="Gene3D" id="3.90.1200.10">
    <property type="match status" value="1"/>
</dbReference>
<dbReference type="HAMAP" id="MF_01604">
    <property type="entry name" value="Thiamine_kinase"/>
    <property type="match status" value="1"/>
</dbReference>
<dbReference type="InterPro" id="IPR002575">
    <property type="entry name" value="Aminoglycoside_PTrfase"/>
</dbReference>
<dbReference type="InterPro" id="IPR011009">
    <property type="entry name" value="Kinase-like_dom_sf"/>
</dbReference>
<dbReference type="InterPro" id="IPR014093">
    <property type="entry name" value="Thiamine_kinase"/>
</dbReference>
<dbReference type="NCBIfam" id="NF007620">
    <property type="entry name" value="PRK10271.1"/>
    <property type="match status" value="1"/>
</dbReference>
<dbReference type="NCBIfam" id="TIGR02721">
    <property type="entry name" value="ycfN_thiK"/>
    <property type="match status" value="1"/>
</dbReference>
<dbReference type="Pfam" id="PF01636">
    <property type="entry name" value="APH"/>
    <property type="match status" value="1"/>
</dbReference>
<dbReference type="SUPFAM" id="SSF56112">
    <property type="entry name" value="Protein kinase-like (PK-like)"/>
    <property type="match status" value="1"/>
</dbReference>
<comment type="function">
    <text evidence="1">Catalyzes the ATP-dependent phosphorylation of thiamine to thiamine phosphate. Is involved in thiamine salvage.</text>
</comment>
<comment type="catalytic activity">
    <reaction evidence="1">
        <text>thiamine + ATP = thiamine phosphate + ADP + H(+)</text>
        <dbReference type="Rhea" id="RHEA:12012"/>
        <dbReference type="ChEBI" id="CHEBI:15378"/>
        <dbReference type="ChEBI" id="CHEBI:18385"/>
        <dbReference type="ChEBI" id="CHEBI:30616"/>
        <dbReference type="ChEBI" id="CHEBI:37575"/>
        <dbReference type="ChEBI" id="CHEBI:456216"/>
        <dbReference type="EC" id="2.7.1.89"/>
    </reaction>
    <physiologicalReaction direction="left-to-right" evidence="1">
        <dbReference type="Rhea" id="RHEA:12013"/>
    </physiologicalReaction>
</comment>
<comment type="pathway">
    <text evidence="1">Cofactor biosynthesis; thiamine diphosphate biosynthesis; thiamine phosphate from thiamine: step 1/1.</text>
</comment>
<comment type="similarity">
    <text evidence="1">Belongs to the thiamine kinase family.</text>
</comment>
<protein>
    <recommendedName>
        <fullName evidence="1">Thiamine kinase</fullName>
        <ecNumber evidence="1">2.7.1.89</ecNumber>
    </recommendedName>
</protein>
<organism>
    <name type="scientific">Salmonella paratyphi A (strain ATCC 9150 / SARB42)</name>
    <dbReference type="NCBI Taxonomy" id="295319"/>
    <lineage>
        <taxon>Bacteria</taxon>
        <taxon>Pseudomonadati</taxon>
        <taxon>Pseudomonadota</taxon>
        <taxon>Gammaproteobacteria</taxon>
        <taxon>Enterobacterales</taxon>
        <taxon>Enterobacteriaceae</taxon>
        <taxon>Salmonella</taxon>
    </lineage>
</organism>